<name>HTRA1_XENLA</name>
<feature type="signal peptide" evidence="3">
    <location>
        <begin position="1"/>
        <end position="18"/>
    </location>
</feature>
<feature type="chain" id="PRO_0000416254" description="Serine protease HTRA1">
    <location>
        <begin position="19"/>
        <end position="459"/>
    </location>
</feature>
<feature type="domain" description="IGFBP N-terminal" evidence="5">
    <location>
        <begin position="22"/>
        <end position="92"/>
    </location>
</feature>
<feature type="domain" description="Kazal-like" evidence="6">
    <location>
        <begin position="74"/>
        <end position="136"/>
    </location>
</feature>
<feature type="domain" description="PDZ" evidence="4">
    <location>
        <begin position="344"/>
        <end position="446"/>
    </location>
</feature>
<feature type="region of interest" description="Serine protease">
    <location>
        <begin position="183"/>
        <end position="343"/>
    </location>
</feature>
<feature type="active site" description="Charge relay system" evidence="2">
    <location>
        <position position="199"/>
    </location>
</feature>
<feature type="active site" description="Charge relay system" evidence="2">
    <location>
        <position position="229"/>
    </location>
</feature>
<feature type="active site" description="Charge relay system" evidence="2">
    <location>
        <position position="307"/>
    </location>
</feature>
<feature type="site" description="Involved in trimer stabilization" evidence="2">
    <location>
        <position position="148"/>
    </location>
</feature>
<feature type="site" description="Involved in trimer stabilization" evidence="2">
    <location>
        <position position="150"/>
    </location>
</feature>
<feature type="site" description="Involved in trimer stabilization" evidence="2">
    <location>
        <position position="257"/>
    </location>
</feature>
<feature type="disulfide bond" evidence="5">
    <location>
        <begin position="26"/>
        <end position="51"/>
    </location>
</feature>
<feature type="disulfide bond" evidence="5">
    <location>
        <begin position="30"/>
        <end position="53"/>
    </location>
</feature>
<feature type="disulfide bond" evidence="5">
    <location>
        <begin position="35"/>
        <end position="54"/>
    </location>
</feature>
<feature type="disulfide bond" evidence="5">
    <location>
        <begin position="42"/>
        <end position="57"/>
    </location>
</feature>
<feature type="disulfide bond" evidence="5">
    <location>
        <begin position="65"/>
        <end position="80"/>
    </location>
</feature>
<feature type="disulfide bond" evidence="5">
    <location>
        <begin position="74"/>
        <end position="89"/>
    </location>
</feature>
<feature type="disulfide bond" evidence="8">
    <location>
        <begin position="91"/>
        <end position="109"/>
    </location>
</feature>
<feature type="disulfide bond" evidence="6">
    <location>
        <begin position="98"/>
        <end position="134"/>
    </location>
</feature>
<feature type="mutagenesis site" description="Loss of activity." evidence="7">
    <original>S</original>
    <variation>A</variation>
    <location>
        <position position="307"/>
    </location>
</feature>
<feature type="sequence conflict" description="In Ref. 2; AAH87471." evidence="8" ref="2">
    <original>N</original>
    <variation>W</variation>
    <location>
        <position position="62"/>
    </location>
</feature>
<proteinExistence type="evidence at protein level"/>
<protein>
    <recommendedName>
        <fullName>Serine protease HTRA1</fullName>
        <ecNumber>3.4.21.-</ecNumber>
    </recommendedName>
    <alternativeName>
        <fullName>High-temperature requirement A serine peptidase 1</fullName>
    </alternativeName>
    <alternativeName>
        <fullName>Serine protease 11</fullName>
    </alternativeName>
</protein>
<sequence>MTMLWLAVLLTCGAPAALLPTSGVGCPARCDPSSCSPAPTNCQSGETALRCGCCSVCAAAENERCGEGPEDPLCASGLRCVRNGGVTRCQCPSNQPVCGSDGKTYSSLCRLQAESKAVQGRGVAAIIPIQRGDCQQGQKDPDSPRYKYNFIADVVEKIAPAVVHIELFRILPFFKREVPAASGSGFIVSEDGLILTNAHVVTNKHRLKVERSDGSTYDAQIIDVDEKADIALIKIKAKGKLPVLLLGRSEELRPGEFVVAIGSPFSLQNTVTTGIVSTAQRGGKELGLRNSDMDYIQTDAIINYGNSGGPLVNLDGEVVGINTLKVTAGISFAIPSDKIRKFMAESHNRQSTGQGTKKKKYLGIRMMSLSQGKLKELKEQVKDFPENTSGAYIVEVLPDTPAEEAGLKEGDIIISISGKTVTSSSEVSEAIKKEGTLQMVIRRGNEDIPISVTPKEIEF</sequence>
<evidence type="ECO:0000250" key="1"/>
<evidence type="ECO:0000250" key="2">
    <source>
        <dbReference type="UniProtKB" id="Q92743"/>
    </source>
</evidence>
<evidence type="ECO:0000255" key="3"/>
<evidence type="ECO:0000255" key="4">
    <source>
        <dbReference type="PROSITE-ProRule" id="PRU00143"/>
    </source>
</evidence>
<evidence type="ECO:0000255" key="5">
    <source>
        <dbReference type="PROSITE-ProRule" id="PRU00653"/>
    </source>
</evidence>
<evidence type="ECO:0000255" key="6">
    <source>
        <dbReference type="PROSITE-ProRule" id="PRU00798"/>
    </source>
</evidence>
<evidence type="ECO:0000269" key="7">
    <source>
    </source>
</evidence>
<evidence type="ECO:0000305" key="8"/>
<gene>
    <name type="primary">htra1</name>
    <name type="synonym">htra</name>
    <name type="synonym">prss11</name>
</gene>
<accession>A6YFB5</accession>
<accession>Q5PPW2</accession>
<organism>
    <name type="scientific">Xenopus laevis</name>
    <name type="common">African clawed frog</name>
    <dbReference type="NCBI Taxonomy" id="8355"/>
    <lineage>
        <taxon>Eukaryota</taxon>
        <taxon>Metazoa</taxon>
        <taxon>Chordata</taxon>
        <taxon>Craniata</taxon>
        <taxon>Vertebrata</taxon>
        <taxon>Euteleostomi</taxon>
        <taxon>Amphibia</taxon>
        <taxon>Batrachia</taxon>
        <taxon>Anura</taxon>
        <taxon>Pipoidea</taxon>
        <taxon>Pipidae</taxon>
        <taxon>Xenopodinae</taxon>
        <taxon>Xenopus</taxon>
        <taxon>Xenopus</taxon>
    </lineage>
</organism>
<keyword id="KW-1003">Cell membrane</keyword>
<keyword id="KW-0963">Cytoplasm</keyword>
<keyword id="KW-1015">Disulfide bond</keyword>
<keyword id="KW-0340">Growth factor binding</keyword>
<keyword id="KW-0378">Hydrolase</keyword>
<keyword id="KW-0472">Membrane</keyword>
<keyword id="KW-0645">Protease</keyword>
<keyword id="KW-1185">Reference proteome</keyword>
<keyword id="KW-0964">Secreted</keyword>
<keyword id="KW-0720">Serine protease</keyword>
<keyword id="KW-0732">Signal</keyword>
<comment type="function">
    <text evidence="7">Serine protease with a variety of targets, including extracellular matrix proteins and proteoglycans such as biglycan, syndecan-4 and glypican-4. Through cleavage of proteoglycans, may release soluble FGF-glycosaminoglycan complexes that promote the range and intensity of FGF signals in the extracellular space. Consequently, facilitates inductive processes in the developing embryo, such as posteriorization, mesoderm induction and neuronal differentiation. Regulates the availability of insulin-like growth factors (IGFs) by cleaving IGF-binding proteins. Inhibits signaling mediated by TGF-beta family members. Consequently, may regulate many physiological processes. Intracellularly, degrades TSC2, leading to the activation of TSC2 downstream targets.</text>
</comment>
<comment type="subunit">
    <text evidence="1">Forms homotrimers. In the presence of substrate, may form higher-order multimers in a PDZ-independent manner.</text>
</comment>
<comment type="subcellular location">
    <subcellularLocation>
        <location evidence="2">Cell membrane</location>
    </subcellularLocation>
    <subcellularLocation>
        <location evidence="7">Secreted</location>
    </subcellularLocation>
    <subcellularLocation>
        <location evidence="2">Cytoplasm</location>
        <location evidence="2">Cytosol</location>
    </subcellularLocation>
    <text evidence="2">Predominantly secreted. Also found associated with the plasma membrane.</text>
</comment>
<comment type="developmental stage">
    <text evidence="7">First detected after midblastula transition. Expression increases during gastrulation and neurulation. Expressed in the blastopore lip at gastrula stage (stage 11), the posterior mesoderm and anterior neural plate after involution (stage 14), the early forebrain and midbrain-hindbrain boundary at the neurula stage (stage 16), and the branchial arch region in tail bud stage embryos (stage 26).</text>
</comment>
<comment type="induction">
    <text evidence="7">Up-regulated by FGF4 and FGF8.</text>
</comment>
<comment type="similarity">
    <text evidence="8">Belongs to the peptidase S1C family.</text>
</comment>
<comment type="sequence caution" evidence="8">
    <conflict type="erroneous initiation">
        <sequence resource="EMBL-CDS" id="AAH87471"/>
    </conflict>
    <text>Truncated N-terminus.</text>
</comment>
<reference key="1">
    <citation type="journal article" date="2007" name="Dev. Cell">
        <title>The secreted serine protease xHtrA1 stimulates long-range FGF signaling in the early Xenopus embryo.</title>
        <authorList>
            <person name="Hou S."/>
            <person name="Maccarana M."/>
            <person name="Min T.H."/>
            <person name="Strate I."/>
            <person name="Pera E.M."/>
        </authorList>
    </citation>
    <scope>NUCLEOTIDE SEQUENCE [MRNA]</scope>
    <scope>FUNCTION</scope>
    <scope>SUBCELLULAR LOCATION</scope>
    <scope>DEVELOPMENTAL STAGE</scope>
    <scope>INDUCTION</scope>
    <scope>MUTAGENESIS OF SER-307</scope>
</reference>
<reference key="2">
    <citation type="submission" date="2004-12" db="EMBL/GenBank/DDBJ databases">
        <authorList>
            <consortium name="NIH - Xenopus Gene Collection (XGC) project"/>
        </authorList>
    </citation>
    <scope>NUCLEOTIDE SEQUENCE [LARGE SCALE MRNA]</scope>
    <source>
        <tissue>Testis</tissue>
    </source>
</reference>
<dbReference type="EC" id="3.4.21.-"/>
<dbReference type="EMBL" id="EF490997">
    <property type="protein sequence ID" value="ABR68659.1"/>
    <property type="molecule type" value="mRNA"/>
</dbReference>
<dbReference type="EMBL" id="BC087471">
    <property type="protein sequence ID" value="AAH87471.1"/>
    <property type="status" value="ALT_INIT"/>
    <property type="molecule type" value="mRNA"/>
</dbReference>
<dbReference type="RefSeq" id="NP_001088796.2">
    <property type="nucleotide sequence ID" value="NM_001095327.2"/>
</dbReference>
<dbReference type="SMR" id="A6YFB5"/>
<dbReference type="MEROPS" id="S01.277"/>
<dbReference type="DNASU" id="496061"/>
<dbReference type="GeneID" id="496061"/>
<dbReference type="KEGG" id="xla:496061"/>
<dbReference type="AGR" id="Xenbase:XB-GENE-865727"/>
<dbReference type="CTD" id="496061"/>
<dbReference type="Xenbase" id="XB-GENE-865727">
    <property type="gene designation" value="htra1.S"/>
</dbReference>
<dbReference type="OrthoDB" id="4217619at2759"/>
<dbReference type="BRENDA" id="3.4.21.107">
    <property type="organism ID" value="6725"/>
</dbReference>
<dbReference type="Proteomes" id="UP000186698">
    <property type="component" value="Chromosome 7S"/>
</dbReference>
<dbReference type="Bgee" id="496061">
    <property type="expression patterns" value="Expressed in camera-type eye and 18 other cell types or tissues"/>
</dbReference>
<dbReference type="GO" id="GO:0062023">
    <property type="term" value="C:collagen-containing extracellular matrix"/>
    <property type="evidence" value="ECO:0000318"/>
    <property type="project" value="GO_Central"/>
</dbReference>
<dbReference type="GO" id="GO:0005829">
    <property type="term" value="C:cytosol"/>
    <property type="evidence" value="ECO:0007669"/>
    <property type="project" value="UniProtKB-SubCell"/>
</dbReference>
<dbReference type="GO" id="GO:0005576">
    <property type="term" value="C:extracellular region"/>
    <property type="evidence" value="ECO:0007669"/>
    <property type="project" value="UniProtKB-SubCell"/>
</dbReference>
<dbReference type="GO" id="GO:0005886">
    <property type="term" value="C:plasma membrane"/>
    <property type="evidence" value="ECO:0007669"/>
    <property type="project" value="UniProtKB-SubCell"/>
</dbReference>
<dbReference type="GO" id="GO:0019838">
    <property type="term" value="F:growth factor binding"/>
    <property type="evidence" value="ECO:0007669"/>
    <property type="project" value="UniProtKB-KW"/>
</dbReference>
<dbReference type="GO" id="GO:0004252">
    <property type="term" value="F:serine-type endopeptidase activity"/>
    <property type="evidence" value="ECO:0000318"/>
    <property type="project" value="GO_Central"/>
</dbReference>
<dbReference type="GO" id="GO:0043065">
    <property type="term" value="P:positive regulation of apoptotic process"/>
    <property type="evidence" value="ECO:0000318"/>
    <property type="project" value="GO_Central"/>
</dbReference>
<dbReference type="GO" id="GO:0012501">
    <property type="term" value="P:programmed cell death"/>
    <property type="evidence" value="ECO:0000318"/>
    <property type="project" value="GO_Central"/>
</dbReference>
<dbReference type="GO" id="GO:0006508">
    <property type="term" value="P:proteolysis"/>
    <property type="evidence" value="ECO:0000318"/>
    <property type="project" value="GO_Central"/>
</dbReference>
<dbReference type="CDD" id="cd06785">
    <property type="entry name" value="cpPDZ_HtrA-like"/>
    <property type="match status" value="1"/>
</dbReference>
<dbReference type="CDD" id="cd00104">
    <property type="entry name" value="KAZAL_FS"/>
    <property type="match status" value="1"/>
</dbReference>
<dbReference type="FunFam" id="2.40.10.120:FF:000002">
    <property type="entry name" value="HtrA serine peptidase 3"/>
    <property type="match status" value="1"/>
</dbReference>
<dbReference type="Gene3D" id="2.30.42.10">
    <property type="match status" value="1"/>
</dbReference>
<dbReference type="Gene3D" id="2.40.10.120">
    <property type="match status" value="1"/>
</dbReference>
<dbReference type="Gene3D" id="3.30.60.30">
    <property type="match status" value="1"/>
</dbReference>
<dbReference type="Gene3D" id="4.10.40.20">
    <property type="match status" value="1"/>
</dbReference>
<dbReference type="InterPro" id="IPR009030">
    <property type="entry name" value="Growth_fac_rcpt_cys_sf"/>
</dbReference>
<dbReference type="InterPro" id="IPR000867">
    <property type="entry name" value="IGFBP-like"/>
</dbReference>
<dbReference type="InterPro" id="IPR002350">
    <property type="entry name" value="Kazal_dom"/>
</dbReference>
<dbReference type="InterPro" id="IPR036058">
    <property type="entry name" value="Kazal_dom_sf"/>
</dbReference>
<dbReference type="InterPro" id="IPR001478">
    <property type="entry name" value="PDZ"/>
</dbReference>
<dbReference type="InterPro" id="IPR036034">
    <property type="entry name" value="PDZ_sf"/>
</dbReference>
<dbReference type="InterPro" id="IPR009003">
    <property type="entry name" value="Peptidase_S1_PA"/>
</dbReference>
<dbReference type="InterPro" id="IPR001940">
    <property type="entry name" value="Peptidase_S1C"/>
</dbReference>
<dbReference type="PANTHER" id="PTHR22939">
    <property type="entry name" value="SERINE PROTEASE FAMILY S1C HTRA-RELATED"/>
    <property type="match status" value="1"/>
</dbReference>
<dbReference type="PANTHER" id="PTHR22939:SF13">
    <property type="entry name" value="SERINE PROTEASE HTRA1"/>
    <property type="match status" value="1"/>
</dbReference>
<dbReference type="Pfam" id="PF00219">
    <property type="entry name" value="IGFBP"/>
    <property type="match status" value="1"/>
</dbReference>
<dbReference type="Pfam" id="PF07648">
    <property type="entry name" value="Kazal_2"/>
    <property type="match status" value="1"/>
</dbReference>
<dbReference type="Pfam" id="PF13180">
    <property type="entry name" value="PDZ_2"/>
    <property type="match status" value="1"/>
</dbReference>
<dbReference type="Pfam" id="PF13365">
    <property type="entry name" value="Trypsin_2"/>
    <property type="match status" value="1"/>
</dbReference>
<dbReference type="PRINTS" id="PR00834">
    <property type="entry name" value="PROTEASES2C"/>
</dbReference>
<dbReference type="SMART" id="SM00121">
    <property type="entry name" value="IB"/>
    <property type="match status" value="1"/>
</dbReference>
<dbReference type="SMART" id="SM00280">
    <property type="entry name" value="KAZAL"/>
    <property type="match status" value="1"/>
</dbReference>
<dbReference type="SMART" id="SM00228">
    <property type="entry name" value="PDZ"/>
    <property type="match status" value="1"/>
</dbReference>
<dbReference type="SUPFAM" id="SSF57184">
    <property type="entry name" value="Growth factor receptor domain"/>
    <property type="match status" value="1"/>
</dbReference>
<dbReference type="SUPFAM" id="SSF100895">
    <property type="entry name" value="Kazal-type serine protease inhibitors"/>
    <property type="match status" value="1"/>
</dbReference>
<dbReference type="SUPFAM" id="SSF50156">
    <property type="entry name" value="PDZ domain-like"/>
    <property type="match status" value="1"/>
</dbReference>
<dbReference type="SUPFAM" id="SSF50494">
    <property type="entry name" value="Trypsin-like serine proteases"/>
    <property type="match status" value="1"/>
</dbReference>
<dbReference type="PROSITE" id="PS51323">
    <property type="entry name" value="IGFBP_N_2"/>
    <property type="match status" value="1"/>
</dbReference>
<dbReference type="PROSITE" id="PS51465">
    <property type="entry name" value="KAZAL_2"/>
    <property type="match status" value="1"/>
</dbReference>
<dbReference type="PROSITE" id="PS50106">
    <property type="entry name" value="PDZ"/>
    <property type="match status" value="1"/>
</dbReference>